<accession>F5ZAY7</accession>
<keyword id="KW-0998">Cell outer membrane</keyword>
<keyword id="KW-0449">Lipoprotein</keyword>
<keyword id="KW-0472">Membrane</keyword>
<keyword id="KW-0564">Palmitate</keyword>
<keyword id="KW-0732">Signal</keyword>
<sequence length="418" mass="45336">MFHNTCGRKGRFARAMGMALAISVTLSGCSTVSDWFADEEELEIRRLKPIDAKFTPSVKWDRDIGDGVDHYFSRLRPVYAYENLYAADRHGSVVAMNPENGDVLWERDFAVFEGDGWWDSIARLWRSGASARIGGISVADRLLFVGTENGVVMALDYETGETKWEASVPGEVLAAPSADEGILVVNTGAGTLFGFDTRTGEQLWRHEGDTPPLTLRGISGPVAANGGALIGTPTGKLQVNLLESGILAWETVIATPTGATELERIVDLDTTPVLFGGTIYTVSYNGTLAAVELRSGRIIWKREYGSYRNLSIEGNSIFVVDNNSNIYALDRRNGVELWSQGSLKSRSVTAATPVGEHIVVGDNWGFVHWIEQETGQIVARVDVGGDDEDDAIYDAPLNVDGVVVTMTRNGVVAAISTL</sequence>
<gene>
    <name evidence="1" type="primary">bamB</name>
    <name type="ordered locus">ambt_03985</name>
</gene>
<evidence type="ECO:0000255" key="1">
    <source>
        <dbReference type="HAMAP-Rule" id="MF_00923"/>
    </source>
</evidence>
<evidence type="ECO:0000305" key="2"/>
<protein>
    <recommendedName>
        <fullName evidence="1">Outer membrane protein assembly factor BamB</fullName>
    </recommendedName>
</protein>
<feature type="signal peptide" evidence="1">
    <location>
        <begin position="1"/>
        <end position="28"/>
    </location>
</feature>
<feature type="chain" id="PRO_0000417676" description="Outer membrane protein assembly factor BamB">
    <location>
        <begin position="29"/>
        <end position="418"/>
    </location>
</feature>
<feature type="lipid moiety-binding region" description="N-palmitoyl cysteine" evidence="1">
    <location>
        <position position="29"/>
    </location>
</feature>
<feature type="lipid moiety-binding region" description="S-diacylglycerol cysteine" evidence="1">
    <location>
        <position position="29"/>
    </location>
</feature>
<comment type="function">
    <text evidence="1">Part of the outer membrane protein assembly complex, which is involved in assembly and insertion of beta-barrel proteins into the outer membrane.</text>
</comment>
<comment type="subunit">
    <text evidence="1">Part of the Bam complex.</text>
</comment>
<comment type="subcellular location">
    <subcellularLocation>
        <location evidence="1">Cell outer membrane</location>
        <topology evidence="1">Lipid-anchor</topology>
    </subcellularLocation>
</comment>
<comment type="similarity">
    <text evidence="1">Belongs to the BamB family.</text>
</comment>
<comment type="sequence caution" evidence="2">
    <conflict type="erroneous initiation">
        <sequence resource="EMBL-CDS" id="AEF02347"/>
    </conflict>
    <text>Truncated N-terminus.</text>
</comment>
<organism>
    <name type="scientific">Alteromonas naphthalenivorans</name>
    <dbReference type="NCBI Taxonomy" id="715451"/>
    <lineage>
        <taxon>Bacteria</taxon>
        <taxon>Pseudomonadati</taxon>
        <taxon>Pseudomonadota</taxon>
        <taxon>Gammaproteobacteria</taxon>
        <taxon>Alteromonadales</taxon>
        <taxon>Alteromonadaceae</taxon>
        <taxon>Alteromonas/Salinimonas group</taxon>
        <taxon>Alteromonas</taxon>
    </lineage>
</organism>
<dbReference type="EMBL" id="CP002339">
    <property type="protein sequence ID" value="AEF02347.1"/>
    <property type="status" value="ALT_INIT"/>
    <property type="molecule type" value="Genomic_DNA"/>
</dbReference>
<dbReference type="SMR" id="F5ZAY7"/>
<dbReference type="KEGG" id="alt:ambt_03985"/>
<dbReference type="eggNOG" id="COG1520">
    <property type="taxonomic scope" value="Bacteria"/>
</dbReference>
<dbReference type="HOGENOM" id="CLU_027480_0_1_6"/>
<dbReference type="OrthoDB" id="5173551at2"/>
<dbReference type="Proteomes" id="UP000000683">
    <property type="component" value="Chromosome"/>
</dbReference>
<dbReference type="GO" id="GO:0009279">
    <property type="term" value="C:cell outer membrane"/>
    <property type="evidence" value="ECO:0007669"/>
    <property type="project" value="UniProtKB-SubCell"/>
</dbReference>
<dbReference type="GO" id="GO:0043165">
    <property type="term" value="P:Gram-negative-bacterium-type cell outer membrane assembly"/>
    <property type="evidence" value="ECO:0007669"/>
    <property type="project" value="UniProtKB-UniRule"/>
</dbReference>
<dbReference type="GO" id="GO:0051205">
    <property type="term" value="P:protein insertion into membrane"/>
    <property type="evidence" value="ECO:0007669"/>
    <property type="project" value="UniProtKB-UniRule"/>
</dbReference>
<dbReference type="Gene3D" id="2.130.10.10">
    <property type="entry name" value="YVTN repeat-like/Quinoprotein amine dehydrogenase"/>
    <property type="match status" value="1"/>
</dbReference>
<dbReference type="HAMAP" id="MF_00923">
    <property type="entry name" value="OM_assembly_BamB"/>
    <property type="match status" value="1"/>
</dbReference>
<dbReference type="InterPro" id="IPR017687">
    <property type="entry name" value="BamB"/>
</dbReference>
<dbReference type="InterPro" id="IPR018391">
    <property type="entry name" value="PQQ_b-propeller_rpt"/>
</dbReference>
<dbReference type="InterPro" id="IPR002372">
    <property type="entry name" value="PQQ_rpt_dom"/>
</dbReference>
<dbReference type="InterPro" id="IPR011047">
    <property type="entry name" value="Quinoprotein_ADH-like_sf"/>
</dbReference>
<dbReference type="InterPro" id="IPR015943">
    <property type="entry name" value="WD40/YVTN_repeat-like_dom_sf"/>
</dbReference>
<dbReference type="NCBIfam" id="TIGR03300">
    <property type="entry name" value="assembly_YfgL"/>
    <property type="match status" value="1"/>
</dbReference>
<dbReference type="NCBIfam" id="NF008351">
    <property type="entry name" value="PRK11138.1"/>
    <property type="match status" value="1"/>
</dbReference>
<dbReference type="PANTHER" id="PTHR34512">
    <property type="entry name" value="CELL SURFACE PROTEIN"/>
    <property type="match status" value="1"/>
</dbReference>
<dbReference type="PANTHER" id="PTHR34512:SF30">
    <property type="entry name" value="OUTER MEMBRANE PROTEIN ASSEMBLY FACTOR BAMB"/>
    <property type="match status" value="1"/>
</dbReference>
<dbReference type="Pfam" id="PF13360">
    <property type="entry name" value="PQQ_2"/>
    <property type="match status" value="1"/>
</dbReference>
<dbReference type="SMART" id="SM00564">
    <property type="entry name" value="PQQ"/>
    <property type="match status" value="6"/>
</dbReference>
<dbReference type="SUPFAM" id="SSF50998">
    <property type="entry name" value="Quinoprotein alcohol dehydrogenase-like"/>
    <property type="match status" value="1"/>
</dbReference>
<reference key="1">
    <citation type="journal article" date="2011" name="J. Bacteriol.">
        <title>Complete genome sequence of the polycyclic aromatic hydrocarbon-degrading bacterium Alteromonas sp. strain SN2.</title>
        <authorList>
            <person name="Jin H.M."/>
            <person name="Jeong H."/>
            <person name="Moon E.J."/>
            <person name="Math R.K."/>
            <person name="Lee K."/>
            <person name="Kim H.J."/>
            <person name="Jeon C.O."/>
            <person name="Oh T.K."/>
            <person name="Kim J.F."/>
        </authorList>
    </citation>
    <scope>NUCLEOTIDE SEQUENCE [LARGE SCALE GENOMIC DNA]</scope>
    <source>
        <strain>JCM 17741 / KACC 18427 / KCTC 11700BP / SN2</strain>
    </source>
</reference>
<name>BAMB_ALTNA</name>
<proteinExistence type="inferred from homology"/>